<sequence length="801" mass="87638">MLVSYKWLKELVDVDVTTAELAEKMSTTGIEVEGVETPAEGLSKLVVGHIVSCEDVPDTHLHLCQVDTGDDELRQVVCGAPNVKTGINVIVAVPGARIADNYKIKKGKIRGMESLGMICSLQELGLSESIIPKEFSDGIQILPEGAIPGDSIFSYLDLDDEIIELSITPNRADALSMRGVAHEVAAIYGKKVHFEEKNLIEEAERAADKISVVIESDKVLSYSARIVKNVTVAPSPQWLQNKLMNAGIRPINNVVDVTNYVLLTYGQPMHAFDFDKFDGTTIVARNAENGEKLITLDGEERDLIADDLVIAVNDQPVALAGVMGGQSTEIGSSSKTVVLEAAVFNGTSIRKTSGRLNLRSESSSRFEKGINYDTVSEAMDFAAAMLQELAGGQVLSGQVTEGVLPTEPVEVSTTLGYVNTRLGTELTYTDIEEVFEKLGFAISGSEVKFTVLVPRRRWDIAIQADLVEEIARIYGYEKLPTTLPEAGATAGELTSMQRLRRRVRTVAEGAGLSEIITYALTTPEKAVQFSTQATNITELMWPMTVDRSALRQNVVSGMLDTIAYNVARKNSNLAVYEIGKVFEQTGNPKEDLPTEVETFTFALTGLVEEKDFQTKSKPVDFFYAKGIVEALFIKLKLDVTFVAQKGLASMHPGRTATILLDGKEIGFVGQVHPQTAKQYDIPETYVAEINLSTIESQMNQALIFEDITKYPSVSRDIALLLAESVSHHDIVSAIETSGVKRLTAIKLFDVYAGNNIAEGYKSMAYSLTFQNPNDNLTDEEVAKYMEKITKSLVEKVNAEIR</sequence>
<name>SYFB_STRA5</name>
<comment type="catalytic activity">
    <reaction evidence="1">
        <text>tRNA(Phe) + L-phenylalanine + ATP = L-phenylalanyl-tRNA(Phe) + AMP + diphosphate + H(+)</text>
        <dbReference type="Rhea" id="RHEA:19413"/>
        <dbReference type="Rhea" id="RHEA-COMP:9668"/>
        <dbReference type="Rhea" id="RHEA-COMP:9699"/>
        <dbReference type="ChEBI" id="CHEBI:15378"/>
        <dbReference type="ChEBI" id="CHEBI:30616"/>
        <dbReference type="ChEBI" id="CHEBI:33019"/>
        <dbReference type="ChEBI" id="CHEBI:58095"/>
        <dbReference type="ChEBI" id="CHEBI:78442"/>
        <dbReference type="ChEBI" id="CHEBI:78531"/>
        <dbReference type="ChEBI" id="CHEBI:456215"/>
        <dbReference type="EC" id="6.1.1.20"/>
    </reaction>
</comment>
<comment type="cofactor">
    <cofactor evidence="1">
        <name>Mg(2+)</name>
        <dbReference type="ChEBI" id="CHEBI:18420"/>
    </cofactor>
    <text evidence="1">Binds 2 magnesium ions per tetramer.</text>
</comment>
<comment type="subunit">
    <text evidence="1">Tetramer of two alpha and two beta subunits.</text>
</comment>
<comment type="subcellular location">
    <subcellularLocation>
        <location>Cytoplasm</location>
    </subcellularLocation>
</comment>
<comment type="similarity">
    <text evidence="1">Belongs to the phenylalanyl-tRNA synthetase beta subunit family. Type 1 subfamily.</text>
</comment>
<proteinExistence type="inferred from homology"/>
<gene>
    <name evidence="1" type="primary">pheT</name>
    <name type="ordered locus">SAG0871</name>
</gene>
<keyword id="KW-0030">Aminoacyl-tRNA synthetase</keyword>
<keyword id="KW-0067">ATP-binding</keyword>
<keyword id="KW-0963">Cytoplasm</keyword>
<keyword id="KW-0436">Ligase</keyword>
<keyword id="KW-0460">Magnesium</keyword>
<keyword id="KW-0479">Metal-binding</keyword>
<keyword id="KW-0547">Nucleotide-binding</keyword>
<keyword id="KW-0648">Protein biosynthesis</keyword>
<keyword id="KW-1185">Reference proteome</keyword>
<keyword id="KW-0694">RNA-binding</keyword>
<keyword id="KW-0820">tRNA-binding</keyword>
<feature type="chain" id="PRO_0000126958" description="Phenylalanine--tRNA ligase beta subunit">
    <location>
        <begin position="1"/>
        <end position="801"/>
    </location>
</feature>
<feature type="domain" description="tRNA-binding" evidence="1">
    <location>
        <begin position="39"/>
        <end position="153"/>
    </location>
</feature>
<feature type="domain" description="B5" evidence="1">
    <location>
        <begin position="406"/>
        <end position="481"/>
    </location>
</feature>
<feature type="domain" description="FDX-ACB" evidence="1">
    <location>
        <begin position="708"/>
        <end position="801"/>
    </location>
</feature>
<feature type="binding site" evidence="1">
    <location>
        <position position="459"/>
    </location>
    <ligand>
        <name>Mg(2+)</name>
        <dbReference type="ChEBI" id="CHEBI:18420"/>
        <note>shared with alpha subunit</note>
    </ligand>
</feature>
<feature type="binding site" evidence="1">
    <location>
        <position position="465"/>
    </location>
    <ligand>
        <name>Mg(2+)</name>
        <dbReference type="ChEBI" id="CHEBI:18420"/>
        <note>shared with alpha subunit</note>
    </ligand>
</feature>
<feature type="binding site" evidence="1">
    <location>
        <position position="468"/>
    </location>
    <ligand>
        <name>Mg(2+)</name>
        <dbReference type="ChEBI" id="CHEBI:18420"/>
        <note>shared with alpha subunit</note>
    </ligand>
</feature>
<feature type="binding site" evidence="1">
    <location>
        <position position="469"/>
    </location>
    <ligand>
        <name>Mg(2+)</name>
        <dbReference type="ChEBI" id="CHEBI:18420"/>
        <note>shared with alpha subunit</note>
    </ligand>
</feature>
<protein>
    <recommendedName>
        <fullName evidence="1">Phenylalanine--tRNA ligase beta subunit</fullName>
        <ecNumber evidence="1">6.1.1.20</ecNumber>
    </recommendedName>
    <alternativeName>
        <fullName evidence="1">Phenylalanyl-tRNA synthetase beta subunit</fullName>
        <shortName evidence="1">PheRS</shortName>
    </alternativeName>
</protein>
<reference key="1">
    <citation type="journal article" date="2002" name="Proc. Natl. Acad. Sci. U.S.A.">
        <title>Complete genome sequence and comparative genomic analysis of an emerging human pathogen, serotype V Streptococcus agalactiae.</title>
        <authorList>
            <person name="Tettelin H."/>
            <person name="Masignani V."/>
            <person name="Cieslewicz M.J."/>
            <person name="Eisen J.A."/>
            <person name="Peterson S.N."/>
            <person name="Wessels M.R."/>
            <person name="Paulsen I.T."/>
            <person name="Nelson K.E."/>
            <person name="Margarit I."/>
            <person name="Read T.D."/>
            <person name="Madoff L.C."/>
            <person name="Wolf A.M."/>
            <person name="Beanan M.J."/>
            <person name="Brinkac L.M."/>
            <person name="Daugherty S.C."/>
            <person name="DeBoy R.T."/>
            <person name="Durkin A.S."/>
            <person name="Kolonay J.F."/>
            <person name="Madupu R."/>
            <person name="Lewis M.R."/>
            <person name="Radune D."/>
            <person name="Fedorova N.B."/>
            <person name="Scanlan D."/>
            <person name="Khouri H.M."/>
            <person name="Mulligan S."/>
            <person name="Carty H.A."/>
            <person name="Cline R.T."/>
            <person name="Van Aken S.E."/>
            <person name="Gill J."/>
            <person name="Scarselli M."/>
            <person name="Mora M."/>
            <person name="Iacobini E.T."/>
            <person name="Brettoni C."/>
            <person name="Galli G."/>
            <person name="Mariani M."/>
            <person name="Vegni F."/>
            <person name="Maione D."/>
            <person name="Rinaudo D."/>
            <person name="Rappuoli R."/>
            <person name="Telford J.L."/>
            <person name="Kasper D.L."/>
            <person name="Grandi G."/>
            <person name="Fraser C.M."/>
        </authorList>
    </citation>
    <scope>NUCLEOTIDE SEQUENCE [LARGE SCALE GENOMIC DNA]</scope>
    <source>
        <strain>ATCC BAA-611 / 2603 V/R</strain>
    </source>
</reference>
<accession>Q8E064</accession>
<dbReference type="EC" id="6.1.1.20" evidence="1"/>
<dbReference type="EMBL" id="AE009948">
    <property type="protein sequence ID" value="AAM99757.1"/>
    <property type="molecule type" value="Genomic_DNA"/>
</dbReference>
<dbReference type="RefSeq" id="NP_687885.1">
    <property type="nucleotide sequence ID" value="NC_004116.1"/>
</dbReference>
<dbReference type="RefSeq" id="WP_000961586.1">
    <property type="nucleotide sequence ID" value="NC_004116.1"/>
</dbReference>
<dbReference type="SMR" id="Q8E064"/>
<dbReference type="STRING" id="208435.SAG0871"/>
<dbReference type="KEGG" id="sag:SAG0871"/>
<dbReference type="PATRIC" id="fig|208435.3.peg.878"/>
<dbReference type="HOGENOM" id="CLU_016891_0_0_9"/>
<dbReference type="OrthoDB" id="9805455at2"/>
<dbReference type="Proteomes" id="UP000000821">
    <property type="component" value="Chromosome"/>
</dbReference>
<dbReference type="GO" id="GO:0009328">
    <property type="term" value="C:phenylalanine-tRNA ligase complex"/>
    <property type="evidence" value="ECO:0007669"/>
    <property type="project" value="TreeGrafter"/>
</dbReference>
<dbReference type="GO" id="GO:0005524">
    <property type="term" value="F:ATP binding"/>
    <property type="evidence" value="ECO:0007669"/>
    <property type="project" value="UniProtKB-UniRule"/>
</dbReference>
<dbReference type="GO" id="GO:0140096">
    <property type="term" value="F:catalytic activity, acting on a protein"/>
    <property type="evidence" value="ECO:0007669"/>
    <property type="project" value="UniProtKB-ARBA"/>
</dbReference>
<dbReference type="GO" id="GO:0000287">
    <property type="term" value="F:magnesium ion binding"/>
    <property type="evidence" value="ECO:0007669"/>
    <property type="project" value="UniProtKB-UniRule"/>
</dbReference>
<dbReference type="GO" id="GO:0004826">
    <property type="term" value="F:phenylalanine-tRNA ligase activity"/>
    <property type="evidence" value="ECO:0007669"/>
    <property type="project" value="UniProtKB-UniRule"/>
</dbReference>
<dbReference type="GO" id="GO:0016740">
    <property type="term" value="F:transferase activity"/>
    <property type="evidence" value="ECO:0007669"/>
    <property type="project" value="UniProtKB-ARBA"/>
</dbReference>
<dbReference type="GO" id="GO:0000049">
    <property type="term" value="F:tRNA binding"/>
    <property type="evidence" value="ECO:0007669"/>
    <property type="project" value="UniProtKB-KW"/>
</dbReference>
<dbReference type="GO" id="GO:0006432">
    <property type="term" value="P:phenylalanyl-tRNA aminoacylation"/>
    <property type="evidence" value="ECO:0007669"/>
    <property type="project" value="UniProtKB-UniRule"/>
</dbReference>
<dbReference type="CDD" id="cd00769">
    <property type="entry name" value="PheRS_beta_core"/>
    <property type="match status" value="1"/>
</dbReference>
<dbReference type="CDD" id="cd02796">
    <property type="entry name" value="tRNA_bind_bactPheRS"/>
    <property type="match status" value="1"/>
</dbReference>
<dbReference type="FunFam" id="2.40.50.140:FF:000045">
    <property type="entry name" value="Phenylalanine--tRNA ligase beta subunit"/>
    <property type="match status" value="1"/>
</dbReference>
<dbReference type="FunFam" id="3.30.70.380:FF:000001">
    <property type="entry name" value="Phenylalanine--tRNA ligase beta subunit"/>
    <property type="match status" value="1"/>
</dbReference>
<dbReference type="FunFam" id="3.30.930.10:FF:000022">
    <property type="entry name" value="Phenylalanine--tRNA ligase beta subunit"/>
    <property type="match status" value="1"/>
</dbReference>
<dbReference type="FunFam" id="3.50.40.10:FF:000001">
    <property type="entry name" value="Phenylalanine--tRNA ligase beta subunit"/>
    <property type="match status" value="1"/>
</dbReference>
<dbReference type="Gene3D" id="3.30.56.10">
    <property type="match status" value="2"/>
</dbReference>
<dbReference type="Gene3D" id="3.30.930.10">
    <property type="entry name" value="Bira Bifunctional Protein, Domain 2"/>
    <property type="match status" value="1"/>
</dbReference>
<dbReference type="Gene3D" id="3.30.70.380">
    <property type="entry name" value="Ferrodoxin-fold anticodon-binding domain"/>
    <property type="match status" value="1"/>
</dbReference>
<dbReference type="Gene3D" id="2.40.50.140">
    <property type="entry name" value="Nucleic acid-binding proteins"/>
    <property type="match status" value="1"/>
</dbReference>
<dbReference type="Gene3D" id="3.50.40.10">
    <property type="entry name" value="Phenylalanyl-trna Synthetase, Chain B, domain 3"/>
    <property type="match status" value="1"/>
</dbReference>
<dbReference type="HAMAP" id="MF_00283">
    <property type="entry name" value="Phe_tRNA_synth_beta1"/>
    <property type="match status" value="1"/>
</dbReference>
<dbReference type="InterPro" id="IPR045864">
    <property type="entry name" value="aa-tRNA-synth_II/BPL/LPL"/>
</dbReference>
<dbReference type="InterPro" id="IPR005146">
    <property type="entry name" value="B3/B4_tRNA-bd"/>
</dbReference>
<dbReference type="InterPro" id="IPR009061">
    <property type="entry name" value="DNA-bd_dom_put_sf"/>
</dbReference>
<dbReference type="InterPro" id="IPR005121">
    <property type="entry name" value="Fdx_antiC-bd"/>
</dbReference>
<dbReference type="InterPro" id="IPR036690">
    <property type="entry name" value="Fdx_antiC-bd_sf"/>
</dbReference>
<dbReference type="InterPro" id="IPR012340">
    <property type="entry name" value="NA-bd_OB-fold"/>
</dbReference>
<dbReference type="InterPro" id="IPR045060">
    <property type="entry name" value="Phe-tRNA-ligase_IIc_bsu"/>
</dbReference>
<dbReference type="InterPro" id="IPR004532">
    <property type="entry name" value="Phe-tRNA-ligase_IIc_bsu_bact"/>
</dbReference>
<dbReference type="InterPro" id="IPR020825">
    <property type="entry name" value="Phe-tRNA_synthase-like_B3/B4"/>
</dbReference>
<dbReference type="InterPro" id="IPR041616">
    <property type="entry name" value="PheRS_beta_core"/>
</dbReference>
<dbReference type="InterPro" id="IPR002547">
    <property type="entry name" value="tRNA-bd_dom"/>
</dbReference>
<dbReference type="InterPro" id="IPR033714">
    <property type="entry name" value="tRNA_bind_bactPheRS"/>
</dbReference>
<dbReference type="InterPro" id="IPR005147">
    <property type="entry name" value="tRNA_synthase_B5-dom"/>
</dbReference>
<dbReference type="NCBIfam" id="TIGR00472">
    <property type="entry name" value="pheT_bact"/>
    <property type="match status" value="1"/>
</dbReference>
<dbReference type="NCBIfam" id="NF045760">
    <property type="entry name" value="YtpR"/>
    <property type="match status" value="1"/>
</dbReference>
<dbReference type="PANTHER" id="PTHR10947:SF0">
    <property type="entry name" value="PHENYLALANINE--TRNA LIGASE BETA SUBUNIT"/>
    <property type="match status" value="1"/>
</dbReference>
<dbReference type="PANTHER" id="PTHR10947">
    <property type="entry name" value="PHENYLALANYL-TRNA SYNTHETASE BETA CHAIN AND LEUCINE-RICH REPEAT-CONTAINING PROTEIN 47"/>
    <property type="match status" value="1"/>
</dbReference>
<dbReference type="Pfam" id="PF03483">
    <property type="entry name" value="B3_4"/>
    <property type="match status" value="1"/>
</dbReference>
<dbReference type="Pfam" id="PF03484">
    <property type="entry name" value="B5"/>
    <property type="match status" value="1"/>
</dbReference>
<dbReference type="Pfam" id="PF03147">
    <property type="entry name" value="FDX-ACB"/>
    <property type="match status" value="1"/>
</dbReference>
<dbReference type="Pfam" id="PF01588">
    <property type="entry name" value="tRNA_bind"/>
    <property type="match status" value="1"/>
</dbReference>
<dbReference type="Pfam" id="PF17759">
    <property type="entry name" value="tRNA_synthFbeta"/>
    <property type="match status" value="1"/>
</dbReference>
<dbReference type="SMART" id="SM00873">
    <property type="entry name" value="B3_4"/>
    <property type="match status" value="1"/>
</dbReference>
<dbReference type="SMART" id="SM00874">
    <property type="entry name" value="B5"/>
    <property type="match status" value="1"/>
</dbReference>
<dbReference type="SMART" id="SM00896">
    <property type="entry name" value="FDX-ACB"/>
    <property type="match status" value="1"/>
</dbReference>
<dbReference type="SUPFAM" id="SSF54991">
    <property type="entry name" value="Anticodon-binding domain of PheRS"/>
    <property type="match status" value="1"/>
</dbReference>
<dbReference type="SUPFAM" id="SSF55681">
    <property type="entry name" value="Class II aaRS and biotin synthetases"/>
    <property type="match status" value="1"/>
</dbReference>
<dbReference type="SUPFAM" id="SSF50249">
    <property type="entry name" value="Nucleic acid-binding proteins"/>
    <property type="match status" value="1"/>
</dbReference>
<dbReference type="SUPFAM" id="SSF56037">
    <property type="entry name" value="PheT/TilS domain"/>
    <property type="match status" value="1"/>
</dbReference>
<dbReference type="SUPFAM" id="SSF46955">
    <property type="entry name" value="Putative DNA-binding domain"/>
    <property type="match status" value="1"/>
</dbReference>
<dbReference type="PROSITE" id="PS51483">
    <property type="entry name" value="B5"/>
    <property type="match status" value="1"/>
</dbReference>
<dbReference type="PROSITE" id="PS51447">
    <property type="entry name" value="FDX_ACB"/>
    <property type="match status" value="1"/>
</dbReference>
<dbReference type="PROSITE" id="PS50886">
    <property type="entry name" value="TRBD"/>
    <property type="match status" value="1"/>
</dbReference>
<evidence type="ECO:0000255" key="1">
    <source>
        <dbReference type="HAMAP-Rule" id="MF_00283"/>
    </source>
</evidence>
<organism>
    <name type="scientific">Streptococcus agalactiae serotype V (strain ATCC BAA-611 / 2603 V/R)</name>
    <dbReference type="NCBI Taxonomy" id="208435"/>
    <lineage>
        <taxon>Bacteria</taxon>
        <taxon>Bacillati</taxon>
        <taxon>Bacillota</taxon>
        <taxon>Bacilli</taxon>
        <taxon>Lactobacillales</taxon>
        <taxon>Streptococcaceae</taxon>
        <taxon>Streptococcus</taxon>
    </lineage>
</organism>